<gene>
    <name evidence="1" type="primary">mtnN</name>
    <name type="ordered locus">lmo1494</name>
</gene>
<name>MTNN_LISMO</name>
<accession>Q8Y729</accession>
<feature type="chain" id="PRO_0000359313" description="5'-methylthioadenosine/S-adenosylhomocysteine nucleosidase">
    <location>
        <begin position="1"/>
        <end position="233"/>
    </location>
</feature>
<feature type="active site" description="Proton acceptor" evidence="1">
    <location>
        <position position="12"/>
    </location>
</feature>
<feature type="active site" description="Proton donor" evidence="1">
    <location>
        <position position="201"/>
    </location>
</feature>
<feature type="binding site" evidence="1">
    <location>
        <position position="78"/>
    </location>
    <ligand>
        <name>substrate</name>
    </ligand>
</feature>
<feature type="binding site" evidence="1">
    <location>
        <position position="156"/>
    </location>
    <ligand>
        <name>substrate</name>
    </ligand>
</feature>
<feature type="binding site" evidence="1">
    <location>
        <begin position="177"/>
        <end position="178"/>
    </location>
    <ligand>
        <name>substrate</name>
    </ligand>
</feature>
<dbReference type="EC" id="3.2.2.9" evidence="1"/>
<dbReference type="EMBL" id="AL591979">
    <property type="protein sequence ID" value="CAC99572.1"/>
    <property type="molecule type" value="Genomic_DNA"/>
</dbReference>
<dbReference type="PIR" id="AF1261">
    <property type="entry name" value="AF1261"/>
</dbReference>
<dbReference type="RefSeq" id="NP_465019.1">
    <property type="nucleotide sequence ID" value="NC_003210.1"/>
</dbReference>
<dbReference type="RefSeq" id="WP_010990143.1">
    <property type="nucleotide sequence ID" value="NZ_CP149495.1"/>
</dbReference>
<dbReference type="SMR" id="Q8Y729"/>
<dbReference type="STRING" id="169963.gene:17594151"/>
<dbReference type="PaxDb" id="169963-lmo1494"/>
<dbReference type="EnsemblBacteria" id="CAC99572">
    <property type="protein sequence ID" value="CAC99572"/>
    <property type="gene ID" value="CAC99572"/>
</dbReference>
<dbReference type="GeneID" id="986944"/>
<dbReference type="KEGG" id="lmo:lmo1494"/>
<dbReference type="PATRIC" id="fig|169963.11.peg.1534"/>
<dbReference type="eggNOG" id="COG0775">
    <property type="taxonomic scope" value="Bacteria"/>
</dbReference>
<dbReference type="HOGENOM" id="CLU_031248_2_2_9"/>
<dbReference type="OrthoDB" id="9792278at2"/>
<dbReference type="PhylomeDB" id="Q8Y729"/>
<dbReference type="BioCyc" id="LMON169963:LMO1494-MONOMER"/>
<dbReference type="UniPathway" id="UPA00904">
    <property type="reaction ID" value="UER00871"/>
</dbReference>
<dbReference type="Proteomes" id="UP000000817">
    <property type="component" value="Chromosome"/>
</dbReference>
<dbReference type="GO" id="GO:0005829">
    <property type="term" value="C:cytosol"/>
    <property type="evidence" value="ECO:0000318"/>
    <property type="project" value="GO_Central"/>
</dbReference>
<dbReference type="GO" id="GO:0008782">
    <property type="term" value="F:adenosylhomocysteine nucleosidase activity"/>
    <property type="evidence" value="ECO:0000318"/>
    <property type="project" value="GO_Central"/>
</dbReference>
<dbReference type="GO" id="GO:0008930">
    <property type="term" value="F:methylthioadenosine nucleosidase activity"/>
    <property type="evidence" value="ECO:0000318"/>
    <property type="project" value="GO_Central"/>
</dbReference>
<dbReference type="GO" id="GO:0019509">
    <property type="term" value="P:L-methionine salvage from methylthioadenosine"/>
    <property type="evidence" value="ECO:0007669"/>
    <property type="project" value="UniProtKB-UniRule"/>
</dbReference>
<dbReference type="GO" id="GO:0019284">
    <property type="term" value="P:L-methionine salvage from S-adenosylmethionine"/>
    <property type="evidence" value="ECO:0000318"/>
    <property type="project" value="GO_Central"/>
</dbReference>
<dbReference type="GO" id="GO:0009164">
    <property type="term" value="P:nucleoside catabolic process"/>
    <property type="evidence" value="ECO:0007669"/>
    <property type="project" value="InterPro"/>
</dbReference>
<dbReference type="CDD" id="cd09008">
    <property type="entry name" value="MTAN"/>
    <property type="match status" value="1"/>
</dbReference>
<dbReference type="FunFam" id="3.40.50.1580:FF:000001">
    <property type="entry name" value="MTA/SAH nucleosidase family protein"/>
    <property type="match status" value="1"/>
</dbReference>
<dbReference type="Gene3D" id="3.40.50.1580">
    <property type="entry name" value="Nucleoside phosphorylase domain"/>
    <property type="match status" value="1"/>
</dbReference>
<dbReference type="HAMAP" id="MF_01684">
    <property type="entry name" value="Salvage_MtnN"/>
    <property type="match status" value="1"/>
</dbReference>
<dbReference type="InterPro" id="IPR010049">
    <property type="entry name" value="MTA_SAH_Nsdase"/>
</dbReference>
<dbReference type="InterPro" id="IPR000845">
    <property type="entry name" value="Nucleoside_phosphorylase_d"/>
</dbReference>
<dbReference type="InterPro" id="IPR035994">
    <property type="entry name" value="Nucleoside_phosphorylase_sf"/>
</dbReference>
<dbReference type="NCBIfam" id="TIGR01704">
    <property type="entry name" value="MTA_SAH-Nsdase"/>
    <property type="match status" value="1"/>
</dbReference>
<dbReference type="NCBIfam" id="NF004079">
    <property type="entry name" value="PRK05584.1"/>
    <property type="match status" value="1"/>
</dbReference>
<dbReference type="PANTHER" id="PTHR46832">
    <property type="entry name" value="5'-METHYLTHIOADENOSINE/S-ADENOSYLHOMOCYSTEINE NUCLEOSIDASE"/>
    <property type="match status" value="1"/>
</dbReference>
<dbReference type="PANTHER" id="PTHR46832:SF1">
    <property type="entry name" value="5'-METHYLTHIOADENOSINE_S-ADENOSYLHOMOCYSTEINE NUCLEOSIDASE"/>
    <property type="match status" value="1"/>
</dbReference>
<dbReference type="Pfam" id="PF01048">
    <property type="entry name" value="PNP_UDP_1"/>
    <property type="match status" value="1"/>
</dbReference>
<dbReference type="SUPFAM" id="SSF53167">
    <property type="entry name" value="Purine and uridine phosphorylases"/>
    <property type="match status" value="1"/>
</dbReference>
<organism>
    <name type="scientific">Listeria monocytogenes serovar 1/2a (strain ATCC BAA-679 / EGD-e)</name>
    <dbReference type="NCBI Taxonomy" id="169963"/>
    <lineage>
        <taxon>Bacteria</taxon>
        <taxon>Bacillati</taxon>
        <taxon>Bacillota</taxon>
        <taxon>Bacilli</taxon>
        <taxon>Bacillales</taxon>
        <taxon>Listeriaceae</taxon>
        <taxon>Listeria</taxon>
    </lineage>
</organism>
<protein>
    <recommendedName>
        <fullName evidence="1">5'-methylthioadenosine/S-adenosylhomocysteine nucleosidase</fullName>
        <shortName evidence="1">MTA/SAH nucleosidase</shortName>
        <shortName evidence="1">MTAN</shortName>
        <ecNumber evidence="1">3.2.2.9</ecNumber>
    </recommendedName>
    <alternativeName>
        <fullName evidence="1">5'-deoxyadenosine nucleosidase</fullName>
        <shortName evidence="1">DOA nucleosidase</shortName>
        <shortName evidence="1">dAdo nucleosidase</shortName>
    </alternativeName>
    <alternativeName>
        <fullName evidence="1">5'-methylthioadenosine nucleosidase</fullName>
        <shortName evidence="1">MTA nucleosidase</shortName>
    </alternativeName>
    <alternativeName>
        <fullName evidence="1">S-adenosylhomocysteine nucleosidase</fullName>
        <shortName evidence="1">AdoHcy nucleosidase</shortName>
        <shortName evidence="1">SAH nucleosidase</shortName>
        <shortName evidence="1">SRH nucleosidase</shortName>
    </alternativeName>
</protein>
<proteinExistence type="inferred from homology"/>
<reference key="1">
    <citation type="journal article" date="2001" name="Science">
        <title>Comparative genomics of Listeria species.</title>
        <authorList>
            <person name="Glaser P."/>
            <person name="Frangeul L."/>
            <person name="Buchrieser C."/>
            <person name="Rusniok C."/>
            <person name="Amend A."/>
            <person name="Baquero F."/>
            <person name="Berche P."/>
            <person name="Bloecker H."/>
            <person name="Brandt P."/>
            <person name="Chakraborty T."/>
            <person name="Charbit A."/>
            <person name="Chetouani F."/>
            <person name="Couve E."/>
            <person name="de Daruvar A."/>
            <person name="Dehoux P."/>
            <person name="Domann E."/>
            <person name="Dominguez-Bernal G."/>
            <person name="Duchaud E."/>
            <person name="Durant L."/>
            <person name="Dussurget O."/>
            <person name="Entian K.-D."/>
            <person name="Fsihi H."/>
            <person name="Garcia-del Portillo F."/>
            <person name="Garrido P."/>
            <person name="Gautier L."/>
            <person name="Goebel W."/>
            <person name="Gomez-Lopez N."/>
            <person name="Hain T."/>
            <person name="Hauf J."/>
            <person name="Jackson D."/>
            <person name="Jones L.-M."/>
            <person name="Kaerst U."/>
            <person name="Kreft J."/>
            <person name="Kuhn M."/>
            <person name="Kunst F."/>
            <person name="Kurapkat G."/>
            <person name="Madueno E."/>
            <person name="Maitournam A."/>
            <person name="Mata Vicente J."/>
            <person name="Ng E."/>
            <person name="Nedjari H."/>
            <person name="Nordsiek G."/>
            <person name="Novella S."/>
            <person name="de Pablos B."/>
            <person name="Perez-Diaz J.-C."/>
            <person name="Purcell R."/>
            <person name="Remmel B."/>
            <person name="Rose M."/>
            <person name="Schlueter T."/>
            <person name="Simoes N."/>
            <person name="Tierrez A."/>
            <person name="Vazquez-Boland J.-A."/>
            <person name="Voss H."/>
            <person name="Wehland J."/>
            <person name="Cossart P."/>
        </authorList>
    </citation>
    <scope>NUCLEOTIDE SEQUENCE [LARGE SCALE GENOMIC DNA]</scope>
    <source>
        <strain>ATCC BAA-679 / EGD-e</strain>
    </source>
</reference>
<comment type="function">
    <text evidence="1">Catalyzes the irreversible cleavage of the glycosidic bond in both 5'-methylthioadenosine (MTA) and S-adenosylhomocysteine (SAH/AdoHcy) to adenine and the corresponding thioribose, 5'-methylthioribose and S-ribosylhomocysteine, respectively. Also cleaves 5'-deoxyadenosine, a toxic by-product of radical S-adenosylmethionine (SAM) enzymes, into 5-deoxyribose and adenine.</text>
</comment>
<comment type="catalytic activity">
    <reaction evidence="1">
        <text>S-adenosyl-L-homocysteine + H2O = S-(5-deoxy-D-ribos-5-yl)-L-homocysteine + adenine</text>
        <dbReference type="Rhea" id="RHEA:17805"/>
        <dbReference type="ChEBI" id="CHEBI:15377"/>
        <dbReference type="ChEBI" id="CHEBI:16708"/>
        <dbReference type="ChEBI" id="CHEBI:57856"/>
        <dbReference type="ChEBI" id="CHEBI:58195"/>
        <dbReference type="EC" id="3.2.2.9"/>
    </reaction>
</comment>
<comment type="catalytic activity">
    <reaction evidence="1">
        <text>S-methyl-5'-thioadenosine + H2O = 5-(methylsulfanyl)-D-ribose + adenine</text>
        <dbReference type="Rhea" id="RHEA:13617"/>
        <dbReference type="ChEBI" id="CHEBI:15377"/>
        <dbReference type="ChEBI" id="CHEBI:16708"/>
        <dbReference type="ChEBI" id="CHEBI:17509"/>
        <dbReference type="ChEBI" id="CHEBI:78440"/>
        <dbReference type="EC" id="3.2.2.9"/>
    </reaction>
</comment>
<comment type="catalytic activity">
    <reaction evidence="1">
        <text>5'-deoxyadenosine + H2O = 5-deoxy-D-ribose + adenine</text>
        <dbReference type="Rhea" id="RHEA:29859"/>
        <dbReference type="ChEBI" id="CHEBI:15377"/>
        <dbReference type="ChEBI" id="CHEBI:16708"/>
        <dbReference type="ChEBI" id="CHEBI:17319"/>
        <dbReference type="ChEBI" id="CHEBI:149540"/>
        <dbReference type="EC" id="3.2.2.9"/>
    </reaction>
    <physiologicalReaction direction="left-to-right" evidence="1">
        <dbReference type="Rhea" id="RHEA:29860"/>
    </physiologicalReaction>
</comment>
<comment type="pathway">
    <text evidence="1">Amino-acid biosynthesis; L-methionine biosynthesis via salvage pathway; S-methyl-5-thio-alpha-D-ribose 1-phosphate from S-methyl-5'-thioadenosine (hydrolase route): step 1/2.</text>
</comment>
<comment type="similarity">
    <text evidence="1">Belongs to the PNP/UDP phosphorylase family. MtnN subfamily.</text>
</comment>
<sequence length="233" mass="25381">MTIGIIGAMEEEVELLKNSMSSVEEIVIGGAKFYIGEIASKEVVLLESGIGKVNAALGTTLMADRFKPEVIINTGSAGGMAEGLAVGDVIISDRLAYGDVDVTEFGYTYGQVPRMPAFYQGDAVLLKKAETIYREYFATSENKAVYGLVVTNDSFIMRPDQHEIIRTFFPDVKAVEMEAAAIAQVAYQFDIPFLIIRAISDLANQEATISFDEFIHLAAKQSATCIIELLKTI</sequence>
<evidence type="ECO:0000255" key="1">
    <source>
        <dbReference type="HAMAP-Rule" id="MF_01684"/>
    </source>
</evidence>
<keyword id="KW-0028">Amino-acid biosynthesis</keyword>
<keyword id="KW-0378">Hydrolase</keyword>
<keyword id="KW-0486">Methionine biosynthesis</keyword>
<keyword id="KW-1185">Reference proteome</keyword>